<sequence>MALTQERKNEIIAQFRTHETDTGSPEVQIAVLTEQINTLNEHLRTHKKDHHSRRGLLKMVGKRRNLLTYLRNSDITRYRELITKLGLRR</sequence>
<dbReference type="EMBL" id="CP000764">
    <property type="protein sequence ID" value="ABS22696.1"/>
    <property type="molecule type" value="Genomic_DNA"/>
</dbReference>
<dbReference type="RefSeq" id="WP_001229392.1">
    <property type="nucleotide sequence ID" value="NC_009674.1"/>
</dbReference>
<dbReference type="SMR" id="A7GRD8"/>
<dbReference type="STRING" id="315749.Bcer98_2460"/>
<dbReference type="GeneID" id="93007304"/>
<dbReference type="KEGG" id="bcy:Bcer98_2460"/>
<dbReference type="eggNOG" id="COG0184">
    <property type="taxonomic scope" value="Bacteria"/>
</dbReference>
<dbReference type="HOGENOM" id="CLU_148518_0_0_9"/>
<dbReference type="OrthoDB" id="9799262at2"/>
<dbReference type="Proteomes" id="UP000002300">
    <property type="component" value="Chromosome"/>
</dbReference>
<dbReference type="GO" id="GO:0022627">
    <property type="term" value="C:cytosolic small ribosomal subunit"/>
    <property type="evidence" value="ECO:0007669"/>
    <property type="project" value="TreeGrafter"/>
</dbReference>
<dbReference type="GO" id="GO:0019843">
    <property type="term" value="F:rRNA binding"/>
    <property type="evidence" value="ECO:0007669"/>
    <property type="project" value="UniProtKB-UniRule"/>
</dbReference>
<dbReference type="GO" id="GO:0003735">
    <property type="term" value="F:structural constituent of ribosome"/>
    <property type="evidence" value="ECO:0007669"/>
    <property type="project" value="InterPro"/>
</dbReference>
<dbReference type="GO" id="GO:0006412">
    <property type="term" value="P:translation"/>
    <property type="evidence" value="ECO:0007669"/>
    <property type="project" value="UniProtKB-UniRule"/>
</dbReference>
<dbReference type="CDD" id="cd00353">
    <property type="entry name" value="Ribosomal_S15p_S13e"/>
    <property type="match status" value="1"/>
</dbReference>
<dbReference type="FunFam" id="1.10.287.10:FF:000002">
    <property type="entry name" value="30S ribosomal protein S15"/>
    <property type="match status" value="1"/>
</dbReference>
<dbReference type="Gene3D" id="6.10.250.3130">
    <property type="match status" value="1"/>
</dbReference>
<dbReference type="Gene3D" id="1.10.287.10">
    <property type="entry name" value="S15/NS1, RNA-binding"/>
    <property type="match status" value="1"/>
</dbReference>
<dbReference type="HAMAP" id="MF_01343_B">
    <property type="entry name" value="Ribosomal_uS15_B"/>
    <property type="match status" value="1"/>
</dbReference>
<dbReference type="InterPro" id="IPR000589">
    <property type="entry name" value="Ribosomal_uS15"/>
</dbReference>
<dbReference type="InterPro" id="IPR005290">
    <property type="entry name" value="Ribosomal_uS15_bac-type"/>
</dbReference>
<dbReference type="InterPro" id="IPR009068">
    <property type="entry name" value="uS15_NS1_RNA-bd_sf"/>
</dbReference>
<dbReference type="NCBIfam" id="TIGR00952">
    <property type="entry name" value="S15_bact"/>
    <property type="match status" value="1"/>
</dbReference>
<dbReference type="PANTHER" id="PTHR23321">
    <property type="entry name" value="RIBOSOMAL PROTEIN S15, BACTERIAL AND ORGANELLAR"/>
    <property type="match status" value="1"/>
</dbReference>
<dbReference type="PANTHER" id="PTHR23321:SF26">
    <property type="entry name" value="SMALL RIBOSOMAL SUBUNIT PROTEIN US15M"/>
    <property type="match status" value="1"/>
</dbReference>
<dbReference type="Pfam" id="PF00312">
    <property type="entry name" value="Ribosomal_S15"/>
    <property type="match status" value="1"/>
</dbReference>
<dbReference type="SMART" id="SM01387">
    <property type="entry name" value="Ribosomal_S15"/>
    <property type="match status" value="1"/>
</dbReference>
<dbReference type="SUPFAM" id="SSF47060">
    <property type="entry name" value="S15/NS1 RNA-binding domain"/>
    <property type="match status" value="1"/>
</dbReference>
<dbReference type="PROSITE" id="PS00362">
    <property type="entry name" value="RIBOSOMAL_S15"/>
    <property type="match status" value="1"/>
</dbReference>
<organism>
    <name type="scientific">Bacillus cytotoxicus (strain DSM 22905 / CIP 110041 / 391-98 / NVH 391-98)</name>
    <dbReference type="NCBI Taxonomy" id="315749"/>
    <lineage>
        <taxon>Bacteria</taxon>
        <taxon>Bacillati</taxon>
        <taxon>Bacillota</taxon>
        <taxon>Bacilli</taxon>
        <taxon>Bacillales</taxon>
        <taxon>Bacillaceae</taxon>
        <taxon>Bacillus</taxon>
        <taxon>Bacillus cereus group</taxon>
    </lineage>
</organism>
<gene>
    <name evidence="1" type="primary">rpsO</name>
    <name type="ordered locus">Bcer98_2460</name>
</gene>
<feature type="chain" id="PRO_1000086788" description="Small ribosomal subunit protein uS15">
    <location>
        <begin position="1"/>
        <end position="89"/>
    </location>
</feature>
<accession>A7GRD8</accession>
<evidence type="ECO:0000255" key="1">
    <source>
        <dbReference type="HAMAP-Rule" id="MF_01343"/>
    </source>
</evidence>
<evidence type="ECO:0000305" key="2"/>
<name>RS15_BACCN</name>
<comment type="function">
    <text evidence="1">One of the primary rRNA binding proteins, it binds directly to 16S rRNA where it helps nucleate assembly of the platform of the 30S subunit by binding and bridging several RNA helices of the 16S rRNA.</text>
</comment>
<comment type="function">
    <text evidence="1">Forms an intersubunit bridge (bridge B4) with the 23S rRNA of the 50S subunit in the ribosome.</text>
</comment>
<comment type="subunit">
    <text evidence="1">Part of the 30S ribosomal subunit. Forms a bridge to the 50S subunit in the 70S ribosome, contacting the 23S rRNA.</text>
</comment>
<comment type="similarity">
    <text evidence="1">Belongs to the universal ribosomal protein uS15 family.</text>
</comment>
<protein>
    <recommendedName>
        <fullName evidence="1">Small ribosomal subunit protein uS15</fullName>
    </recommendedName>
    <alternativeName>
        <fullName evidence="2">30S ribosomal protein S15</fullName>
    </alternativeName>
</protein>
<proteinExistence type="inferred from homology"/>
<keyword id="KW-0687">Ribonucleoprotein</keyword>
<keyword id="KW-0689">Ribosomal protein</keyword>
<keyword id="KW-0694">RNA-binding</keyword>
<keyword id="KW-0699">rRNA-binding</keyword>
<reference key="1">
    <citation type="journal article" date="2008" name="Chem. Biol. Interact.">
        <title>Extending the Bacillus cereus group genomics to putative food-borne pathogens of different toxicity.</title>
        <authorList>
            <person name="Lapidus A."/>
            <person name="Goltsman E."/>
            <person name="Auger S."/>
            <person name="Galleron N."/>
            <person name="Segurens B."/>
            <person name="Dossat C."/>
            <person name="Land M.L."/>
            <person name="Broussolle V."/>
            <person name="Brillard J."/>
            <person name="Guinebretiere M.-H."/>
            <person name="Sanchis V."/>
            <person name="Nguen-the C."/>
            <person name="Lereclus D."/>
            <person name="Richardson P."/>
            <person name="Wincker P."/>
            <person name="Weissenbach J."/>
            <person name="Ehrlich S.D."/>
            <person name="Sorokin A."/>
        </authorList>
    </citation>
    <scope>NUCLEOTIDE SEQUENCE [LARGE SCALE GENOMIC DNA]</scope>
    <source>
        <strain>DSM 22905 / CIP 110041 / 391-98 / NVH 391-98</strain>
    </source>
</reference>